<dbReference type="EC" id="3.4.24.59"/>
<dbReference type="EMBL" id="AAEY01000010">
    <property type="protein sequence ID" value="EAL22478.1"/>
    <property type="status" value="ALT_INIT"/>
    <property type="molecule type" value="Genomic_DNA"/>
</dbReference>
<dbReference type="RefSeq" id="XP_777125.1">
    <property type="nucleotide sequence ID" value="XM_772032.1"/>
</dbReference>
<dbReference type="SMR" id="P0CQ21"/>
<dbReference type="EnsemblFungi" id="AAW41837">
    <property type="protein sequence ID" value="AAW41837"/>
    <property type="gene ID" value="CNB02140"/>
</dbReference>
<dbReference type="GeneID" id="4934451"/>
<dbReference type="KEGG" id="cnb:CNBB3570"/>
<dbReference type="HOGENOM" id="CLU_001805_0_0_1"/>
<dbReference type="OrthoDB" id="2159at5206"/>
<dbReference type="GO" id="GO:0005759">
    <property type="term" value="C:mitochondrial matrix"/>
    <property type="evidence" value="ECO:0007669"/>
    <property type="project" value="UniProtKB-SubCell"/>
</dbReference>
<dbReference type="GO" id="GO:0046872">
    <property type="term" value="F:metal ion binding"/>
    <property type="evidence" value="ECO:0007669"/>
    <property type="project" value="UniProtKB-KW"/>
</dbReference>
<dbReference type="GO" id="GO:0004222">
    <property type="term" value="F:metalloendopeptidase activity"/>
    <property type="evidence" value="ECO:0007669"/>
    <property type="project" value="UniProtKB-EC"/>
</dbReference>
<dbReference type="GO" id="GO:0006518">
    <property type="term" value="P:peptide metabolic process"/>
    <property type="evidence" value="ECO:0007669"/>
    <property type="project" value="TreeGrafter"/>
</dbReference>
<dbReference type="GO" id="GO:0006627">
    <property type="term" value="P:protein processing involved in protein targeting to mitochondrion"/>
    <property type="evidence" value="ECO:0007669"/>
    <property type="project" value="TreeGrafter"/>
</dbReference>
<dbReference type="CDD" id="cd06457">
    <property type="entry name" value="M3A_MIP"/>
    <property type="match status" value="1"/>
</dbReference>
<dbReference type="Gene3D" id="3.40.390.10">
    <property type="entry name" value="Collagenase (Catalytic Domain)"/>
    <property type="match status" value="1"/>
</dbReference>
<dbReference type="Gene3D" id="1.10.1370.10">
    <property type="entry name" value="Neurolysin, domain 3"/>
    <property type="match status" value="1"/>
</dbReference>
<dbReference type="InterPro" id="IPR033851">
    <property type="entry name" value="M3A_MIP"/>
</dbReference>
<dbReference type="InterPro" id="IPR024079">
    <property type="entry name" value="MetalloPept_cat_dom_sf"/>
</dbReference>
<dbReference type="InterPro" id="IPR024077">
    <property type="entry name" value="Neurolysin/TOP_dom2"/>
</dbReference>
<dbReference type="InterPro" id="IPR045090">
    <property type="entry name" value="Pept_M3A_M3B"/>
</dbReference>
<dbReference type="InterPro" id="IPR001567">
    <property type="entry name" value="Pept_M3A_M3B_dom"/>
</dbReference>
<dbReference type="PANTHER" id="PTHR11804:SF79">
    <property type="entry name" value="MITOCHONDRIAL INTERMEDIATE PEPTIDASE"/>
    <property type="match status" value="1"/>
</dbReference>
<dbReference type="PANTHER" id="PTHR11804">
    <property type="entry name" value="PROTEASE M3 THIMET OLIGOPEPTIDASE-RELATED"/>
    <property type="match status" value="1"/>
</dbReference>
<dbReference type="Pfam" id="PF01432">
    <property type="entry name" value="Peptidase_M3"/>
    <property type="match status" value="1"/>
</dbReference>
<dbReference type="SUPFAM" id="SSF55486">
    <property type="entry name" value="Metalloproteases ('zincins'), catalytic domain"/>
    <property type="match status" value="1"/>
</dbReference>
<dbReference type="PROSITE" id="PS00142">
    <property type="entry name" value="ZINC_PROTEASE"/>
    <property type="match status" value="1"/>
</dbReference>
<name>PMIP2_CRYNB</name>
<organism>
    <name type="scientific">Cryptococcus neoformans var. neoformans serotype D (strain B-3501A)</name>
    <name type="common">Filobasidiella neoformans</name>
    <dbReference type="NCBI Taxonomy" id="283643"/>
    <lineage>
        <taxon>Eukaryota</taxon>
        <taxon>Fungi</taxon>
        <taxon>Dikarya</taxon>
        <taxon>Basidiomycota</taxon>
        <taxon>Agaricomycotina</taxon>
        <taxon>Tremellomycetes</taxon>
        <taxon>Tremellales</taxon>
        <taxon>Cryptococcaceae</taxon>
        <taxon>Cryptococcus</taxon>
        <taxon>Cryptococcus neoformans species complex</taxon>
    </lineage>
</organism>
<reference key="1">
    <citation type="journal article" date="2005" name="Science">
        <title>The genome of the basidiomycetous yeast and human pathogen Cryptococcus neoformans.</title>
        <authorList>
            <person name="Loftus B.J."/>
            <person name="Fung E."/>
            <person name="Roncaglia P."/>
            <person name="Rowley D."/>
            <person name="Amedeo P."/>
            <person name="Bruno D."/>
            <person name="Vamathevan J."/>
            <person name="Miranda M."/>
            <person name="Anderson I.J."/>
            <person name="Fraser J.A."/>
            <person name="Allen J.E."/>
            <person name="Bosdet I.E."/>
            <person name="Brent M.R."/>
            <person name="Chiu R."/>
            <person name="Doering T.L."/>
            <person name="Donlin M.J."/>
            <person name="D'Souza C.A."/>
            <person name="Fox D.S."/>
            <person name="Grinberg V."/>
            <person name="Fu J."/>
            <person name="Fukushima M."/>
            <person name="Haas B.J."/>
            <person name="Huang J.C."/>
            <person name="Janbon G."/>
            <person name="Jones S.J.M."/>
            <person name="Koo H.L."/>
            <person name="Krzywinski M.I."/>
            <person name="Kwon-Chung K.J."/>
            <person name="Lengeler K.B."/>
            <person name="Maiti R."/>
            <person name="Marra M.A."/>
            <person name="Marra R.E."/>
            <person name="Mathewson C.A."/>
            <person name="Mitchell T.G."/>
            <person name="Pertea M."/>
            <person name="Riggs F.R."/>
            <person name="Salzberg S.L."/>
            <person name="Schein J.E."/>
            <person name="Shvartsbeyn A."/>
            <person name="Shin H."/>
            <person name="Shumway M."/>
            <person name="Specht C.A."/>
            <person name="Suh B.B."/>
            <person name="Tenney A."/>
            <person name="Utterback T.R."/>
            <person name="Wickes B.L."/>
            <person name="Wortman J.R."/>
            <person name="Wye N.H."/>
            <person name="Kronstad J.W."/>
            <person name="Lodge J.K."/>
            <person name="Heitman J."/>
            <person name="Davis R.W."/>
            <person name="Fraser C.M."/>
            <person name="Hyman R.W."/>
        </authorList>
    </citation>
    <scope>NUCLEOTIDE SEQUENCE [LARGE SCALE GENOMIC DNA]</scope>
    <source>
        <strain>B-3501A</strain>
    </source>
</reference>
<keyword id="KW-0378">Hydrolase</keyword>
<keyword id="KW-0479">Metal-binding</keyword>
<keyword id="KW-0482">Metalloprotease</keyword>
<keyword id="KW-0496">Mitochondrion</keyword>
<keyword id="KW-0645">Protease</keyword>
<keyword id="KW-0809">Transit peptide</keyword>
<keyword id="KW-0862">Zinc</keyword>
<sequence>MRRLQQSLRRRSARRCPFILIPHRLLTTSYASYKPAPQATLEIEDTNSPTFLLKTSPIQLPARATSDDSAIKAHFDLPHSIFGDMVGVRREHVKGLFHYDSLTQPESLMRLTDRTLIQASAIVQRIVVAPQDPTGRELRLVVKNLDRLSDILCGVIDMCELIRNVHPHQDWVNQSDRTHQILCSFMNELNATRGLYESLAKAIAHPFNDPLTTSELRVARIFLTDFERSGIHLPPSVRERFVKHSDALLFLGRSFLSSASSGPSTVPHIEIPDPHRLLTGLGRQFVDSLPRTGRNGQAVIEPGSWEAQMILRYAREGRARELVYVGGMRADKKRISVLEAMLKERAELASVLGKNNWAEVVLVDKMTKTPENVMRFLTSLAQHHQPVARAEVDMLRRMKATALTGNYFDPRNSRTRHLPLFHAWDRDYYSDKYLTSLIPTGSPPSISPYLSTGTVMSGLSRIFSRLYGISFKPAVVSPGEVWHPSVRRLDVVHEEEGLIGVIYCDFFSRIGKSSGAAHYTVRCSRRVDDDDIDGDGLPEDWDKPYGPGLEADKESLSGKPGKYQLPIIALSMDVGTVNEGRPALLNWQELETLFHEMGHAIHSMIGRTEYHNVSGTRCATDFVELPSILMEHFVSSPEVLSTLAFHHATGEPLPIPVIEAHLALNQSLSALETHGQIAMALLDQKYHTLRHGQDSFDSTAIWFQLQQEIGVIQPVPGTAWQMQFGHLYGYGATYYSYLFDRAIAGKIWSTLFHRSGTSQAYDRKAEGILSREGGELLKEKVLKWGGGRDPWEMVGDVIGGVEGDELSKGDERALALVGSWSVV</sequence>
<accession>P0CQ21</accession>
<accession>Q55XK7</accession>
<accession>Q5KMC8</accession>
<comment type="function">
    <text evidence="1">Cleaves proteins, imported into the mitochondrion, to their mature size. While most mitochondrial precursor proteins are processed to the mature form in one step by mitochondrial processing peptidase (MPP), the sequential cleavage by MIP of an octapeptide after initial processing by MPP is a required step for a subgroup of nuclear-encoded precursor proteins destined for the matrix or the inner membrane (By similarity).</text>
</comment>
<comment type="catalytic activity">
    <reaction>
        <text>Release of an N-terminal octapeptide as second stage of processing of some proteins imported into the mitochondrion.</text>
        <dbReference type="EC" id="3.4.24.59"/>
    </reaction>
</comment>
<comment type="cofactor">
    <cofactor evidence="1">
        <name>Zn(2+)</name>
        <dbReference type="ChEBI" id="CHEBI:29105"/>
    </cofactor>
    <text evidence="1">Binds 1 zinc ion.</text>
</comment>
<comment type="subcellular location">
    <subcellularLocation>
        <location evidence="1">Mitochondrion matrix</location>
    </subcellularLocation>
</comment>
<comment type="similarity">
    <text evidence="5">Belongs to the peptidase M3 family.</text>
</comment>
<comment type="sequence caution" evidence="5">
    <conflict type="erroneous initiation">
        <sequence resource="EMBL-CDS" id="EAL22478"/>
    </conflict>
    <text>Truncated N-terminus.</text>
</comment>
<protein>
    <recommendedName>
        <fullName>Mitochondrial intermediate peptidase 2</fullName>
        <shortName>MIP 2</shortName>
        <ecNumber>3.4.24.59</ecNumber>
    </recommendedName>
    <alternativeName>
        <fullName>Octapeptidyl aminopeptidase 2</fullName>
    </alternativeName>
</protein>
<proteinExistence type="inferred from homology"/>
<gene>
    <name type="primary">OCT2</name>
    <name type="ordered locus">CNBB3570</name>
</gene>
<feature type="transit peptide" description="Mitochondrion" evidence="2">
    <location>
        <begin position="1"/>
        <end position="33"/>
    </location>
</feature>
<feature type="chain" id="PRO_0000410220" description="Mitochondrial intermediate peptidase 2">
    <location>
        <begin position="34"/>
        <end position="823"/>
    </location>
</feature>
<feature type="region of interest" description="Disordered" evidence="4">
    <location>
        <begin position="532"/>
        <end position="553"/>
    </location>
</feature>
<feature type="active site" evidence="3">
    <location>
        <position position="596"/>
    </location>
</feature>
<feature type="binding site" evidence="3">
    <location>
        <position position="595"/>
    </location>
    <ligand>
        <name>Zn(2+)</name>
        <dbReference type="ChEBI" id="CHEBI:29105"/>
        <note>catalytic</note>
    </ligand>
</feature>
<feature type="binding site" evidence="3">
    <location>
        <position position="599"/>
    </location>
    <ligand>
        <name>Zn(2+)</name>
        <dbReference type="ChEBI" id="CHEBI:29105"/>
        <note>catalytic</note>
    </ligand>
</feature>
<feature type="binding site" evidence="3">
    <location>
        <position position="602"/>
    </location>
    <ligand>
        <name>Zn(2+)</name>
        <dbReference type="ChEBI" id="CHEBI:29105"/>
        <note>catalytic</note>
    </ligand>
</feature>
<evidence type="ECO:0000250" key="1"/>
<evidence type="ECO:0000255" key="2"/>
<evidence type="ECO:0000255" key="3">
    <source>
        <dbReference type="PROSITE-ProRule" id="PRU10095"/>
    </source>
</evidence>
<evidence type="ECO:0000256" key="4">
    <source>
        <dbReference type="SAM" id="MobiDB-lite"/>
    </source>
</evidence>
<evidence type="ECO:0000305" key="5"/>